<feature type="chain" id="PRO_0000130064" description="Small ribosomal subunit protein uS3">
    <location>
        <begin position="1"/>
        <end position="219"/>
    </location>
</feature>
<feature type="domain" description="KH type-2" evidence="1">
    <location>
        <begin position="38"/>
        <end position="106"/>
    </location>
</feature>
<gene>
    <name evidence="1" type="primary">rpsC</name>
    <name type="ordered locus">BA_0116</name>
    <name type="ordered locus">GBAA_0116</name>
    <name type="ordered locus">BAS0116</name>
</gene>
<reference key="1">
    <citation type="journal article" date="2003" name="Nature">
        <title>The genome sequence of Bacillus anthracis Ames and comparison to closely related bacteria.</title>
        <authorList>
            <person name="Read T.D."/>
            <person name="Peterson S.N."/>
            <person name="Tourasse N.J."/>
            <person name="Baillie L.W."/>
            <person name="Paulsen I.T."/>
            <person name="Nelson K.E."/>
            <person name="Tettelin H."/>
            <person name="Fouts D.E."/>
            <person name="Eisen J.A."/>
            <person name="Gill S.R."/>
            <person name="Holtzapple E.K."/>
            <person name="Okstad O.A."/>
            <person name="Helgason E."/>
            <person name="Rilstone J."/>
            <person name="Wu M."/>
            <person name="Kolonay J.F."/>
            <person name="Beanan M.J."/>
            <person name="Dodson R.J."/>
            <person name="Brinkac L.M."/>
            <person name="Gwinn M.L."/>
            <person name="DeBoy R.T."/>
            <person name="Madpu R."/>
            <person name="Daugherty S.C."/>
            <person name="Durkin A.S."/>
            <person name="Haft D.H."/>
            <person name="Nelson W.C."/>
            <person name="Peterson J.D."/>
            <person name="Pop M."/>
            <person name="Khouri H.M."/>
            <person name="Radune D."/>
            <person name="Benton J.L."/>
            <person name="Mahamoud Y."/>
            <person name="Jiang L."/>
            <person name="Hance I.R."/>
            <person name="Weidman J.F."/>
            <person name="Berry K.J."/>
            <person name="Plaut R.D."/>
            <person name="Wolf A.M."/>
            <person name="Watkins K.L."/>
            <person name="Nierman W.C."/>
            <person name="Hazen A."/>
            <person name="Cline R.T."/>
            <person name="Redmond C."/>
            <person name="Thwaite J.E."/>
            <person name="White O."/>
            <person name="Salzberg S.L."/>
            <person name="Thomason B."/>
            <person name="Friedlander A.M."/>
            <person name="Koehler T.M."/>
            <person name="Hanna P.C."/>
            <person name="Kolstoe A.-B."/>
            <person name="Fraser C.M."/>
        </authorList>
    </citation>
    <scope>NUCLEOTIDE SEQUENCE [LARGE SCALE GENOMIC DNA]</scope>
    <source>
        <strain>Ames / isolate Porton</strain>
    </source>
</reference>
<reference key="2">
    <citation type="journal article" date="2009" name="J. Bacteriol.">
        <title>The complete genome sequence of Bacillus anthracis Ames 'Ancestor'.</title>
        <authorList>
            <person name="Ravel J."/>
            <person name="Jiang L."/>
            <person name="Stanley S.T."/>
            <person name="Wilson M.R."/>
            <person name="Decker R.S."/>
            <person name="Read T.D."/>
            <person name="Worsham P."/>
            <person name="Keim P.S."/>
            <person name="Salzberg S.L."/>
            <person name="Fraser-Liggett C.M."/>
            <person name="Rasko D.A."/>
        </authorList>
    </citation>
    <scope>NUCLEOTIDE SEQUENCE [LARGE SCALE GENOMIC DNA]</scope>
    <source>
        <strain>Ames ancestor</strain>
    </source>
</reference>
<reference key="3">
    <citation type="submission" date="2004-01" db="EMBL/GenBank/DDBJ databases">
        <title>Complete genome sequence of Bacillus anthracis Sterne.</title>
        <authorList>
            <person name="Brettin T.S."/>
            <person name="Bruce D."/>
            <person name="Challacombe J.F."/>
            <person name="Gilna P."/>
            <person name="Han C."/>
            <person name="Hill K."/>
            <person name="Hitchcock P."/>
            <person name="Jackson P."/>
            <person name="Keim P."/>
            <person name="Longmire J."/>
            <person name="Lucas S."/>
            <person name="Okinaka R."/>
            <person name="Richardson P."/>
            <person name="Rubin E."/>
            <person name="Tice H."/>
        </authorList>
    </citation>
    <scope>NUCLEOTIDE SEQUENCE [LARGE SCALE GENOMIC DNA]</scope>
    <source>
        <strain>Sterne</strain>
    </source>
</reference>
<keyword id="KW-1185">Reference proteome</keyword>
<keyword id="KW-0687">Ribonucleoprotein</keyword>
<keyword id="KW-0689">Ribosomal protein</keyword>
<keyword id="KW-0694">RNA-binding</keyword>
<keyword id="KW-0699">rRNA-binding</keyword>
<comment type="function">
    <text evidence="1">Binds the lower part of the 30S subunit head. Binds mRNA in the 70S ribosome, positioning it for translation.</text>
</comment>
<comment type="subunit">
    <text evidence="1">Part of the 30S ribosomal subunit. Forms a tight complex with proteins S10 and S14.</text>
</comment>
<comment type="similarity">
    <text evidence="1">Belongs to the universal ribosomal protein uS3 family.</text>
</comment>
<sequence length="219" mass="24294">MGQKVNPIGLRVGVIRDWESRWFAEKDYATLLHEDIKIREYINVRLKDSAVAKVEIERAANRVNVTIHTAKPGMVIGKGGTEVEALRKALNQLTGKRVHINILEVKRADLNAKLVGENIARQLENRVSFRRAQKQVIQRAMRAGAKGIKTQVSGRLGGADIARAESYSEGTVPLHTLRADIDYAAVEADTTYGKLGVKVWIYRGEVLPTKKKASEEGGK</sequence>
<proteinExistence type="inferred from homology"/>
<accession>Q81VS4</accession>
<accession>Q6I4S8</accession>
<accession>Q6KYH4</accession>
<dbReference type="EMBL" id="AE016879">
    <property type="protein sequence ID" value="AAP24170.1"/>
    <property type="molecule type" value="Genomic_DNA"/>
</dbReference>
<dbReference type="EMBL" id="AE017334">
    <property type="protein sequence ID" value="AAT29196.1"/>
    <property type="molecule type" value="Genomic_DNA"/>
</dbReference>
<dbReference type="EMBL" id="AE017225">
    <property type="protein sequence ID" value="AAT52453.1"/>
    <property type="molecule type" value="Genomic_DNA"/>
</dbReference>
<dbReference type="RefSeq" id="NP_842684.1">
    <property type="nucleotide sequence ID" value="NC_003997.3"/>
</dbReference>
<dbReference type="RefSeq" id="WP_000529956.1">
    <property type="nucleotide sequence ID" value="NZ_WXXJ01000051.1"/>
</dbReference>
<dbReference type="RefSeq" id="YP_026402.1">
    <property type="nucleotide sequence ID" value="NC_005945.1"/>
</dbReference>
<dbReference type="SMR" id="Q81VS4"/>
<dbReference type="STRING" id="261594.GBAA_0116"/>
<dbReference type="DNASU" id="1086384"/>
<dbReference type="GeneID" id="93010937"/>
<dbReference type="KEGG" id="ban:BA_0116"/>
<dbReference type="KEGG" id="bar:GBAA_0116"/>
<dbReference type="KEGG" id="bat:BAS0116"/>
<dbReference type="PATRIC" id="fig|198094.11.peg.113"/>
<dbReference type="eggNOG" id="COG0092">
    <property type="taxonomic scope" value="Bacteria"/>
</dbReference>
<dbReference type="HOGENOM" id="CLU_058591_0_2_9"/>
<dbReference type="OMA" id="KTNPIGN"/>
<dbReference type="OrthoDB" id="9806396at2"/>
<dbReference type="Proteomes" id="UP000000427">
    <property type="component" value="Chromosome"/>
</dbReference>
<dbReference type="Proteomes" id="UP000000594">
    <property type="component" value="Chromosome"/>
</dbReference>
<dbReference type="GO" id="GO:0022627">
    <property type="term" value="C:cytosolic small ribosomal subunit"/>
    <property type="evidence" value="ECO:0007669"/>
    <property type="project" value="TreeGrafter"/>
</dbReference>
<dbReference type="GO" id="GO:0003729">
    <property type="term" value="F:mRNA binding"/>
    <property type="evidence" value="ECO:0007669"/>
    <property type="project" value="UniProtKB-UniRule"/>
</dbReference>
<dbReference type="GO" id="GO:0019843">
    <property type="term" value="F:rRNA binding"/>
    <property type="evidence" value="ECO:0007669"/>
    <property type="project" value="UniProtKB-UniRule"/>
</dbReference>
<dbReference type="GO" id="GO:0003735">
    <property type="term" value="F:structural constituent of ribosome"/>
    <property type="evidence" value="ECO:0007669"/>
    <property type="project" value="InterPro"/>
</dbReference>
<dbReference type="GO" id="GO:0006412">
    <property type="term" value="P:translation"/>
    <property type="evidence" value="ECO:0007669"/>
    <property type="project" value="UniProtKB-UniRule"/>
</dbReference>
<dbReference type="CDD" id="cd02412">
    <property type="entry name" value="KH-II_30S_S3"/>
    <property type="match status" value="1"/>
</dbReference>
<dbReference type="FunFam" id="3.30.1140.32:FF:000001">
    <property type="entry name" value="30S ribosomal protein S3"/>
    <property type="match status" value="1"/>
</dbReference>
<dbReference type="FunFam" id="3.30.300.20:FF:000001">
    <property type="entry name" value="30S ribosomal protein S3"/>
    <property type="match status" value="1"/>
</dbReference>
<dbReference type="Gene3D" id="3.30.300.20">
    <property type="match status" value="1"/>
</dbReference>
<dbReference type="Gene3D" id="3.30.1140.32">
    <property type="entry name" value="Ribosomal protein S3, C-terminal domain"/>
    <property type="match status" value="1"/>
</dbReference>
<dbReference type="HAMAP" id="MF_01309_B">
    <property type="entry name" value="Ribosomal_uS3_B"/>
    <property type="match status" value="1"/>
</dbReference>
<dbReference type="InterPro" id="IPR004087">
    <property type="entry name" value="KH_dom"/>
</dbReference>
<dbReference type="InterPro" id="IPR015946">
    <property type="entry name" value="KH_dom-like_a/b"/>
</dbReference>
<dbReference type="InterPro" id="IPR004044">
    <property type="entry name" value="KH_dom_type_2"/>
</dbReference>
<dbReference type="InterPro" id="IPR009019">
    <property type="entry name" value="KH_sf_prok-type"/>
</dbReference>
<dbReference type="InterPro" id="IPR036419">
    <property type="entry name" value="Ribosomal_S3_C_sf"/>
</dbReference>
<dbReference type="InterPro" id="IPR005704">
    <property type="entry name" value="Ribosomal_uS3_bac-typ"/>
</dbReference>
<dbReference type="InterPro" id="IPR001351">
    <property type="entry name" value="Ribosomal_uS3_C"/>
</dbReference>
<dbReference type="InterPro" id="IPR018280">
    <property type="entry name" value="Ribosomal_uS3_CS"/>
</dbReference>
<dbReference type="NCBIfam" id="TIGR01009">
    <property type="entry name" value="rpsC_bact"/>
    <property type="match status" value="1"/>
</dbReference>
<dbReference type="PANTHER" id="PTHR11760">
    <property type="entry name" value="30S/40S RIBOSOMAL PROTEIN S3"/>
    <property type="match status" value="1"/>
</dbReference>
<dbReference type="PANTHER" id="PTHR11760:SF19">
    <property type="entry name" value="SMALL RIBOSOMAL SUBUNIT PROTEIN US3C"/>
    <property type="match status" value="1"/>
</dbReference>
<dbReference type="Pfam" id="PF07650">
    <property type="entry name" value="KH_2"/>
    <property type="match status" value="1"/>
</dbReference>
<dbReference type="Pfam" id="PF00189">
    <property type="entry name" value="Ribosomal_S3_C"/>
    <property type="match status" value="1"/>
</dbReference>
<dbReference type="SMART" id="SM00322">
    <property type="entry name" value="KH"/>
    <property type="match status" value="1"/>
</dbReference>
<dbReference type="SUPFAM" id="SSF54814">
    <property type="entry name" value="Prokaryotic type KH domain (KH-domain type II)"/>
    <property type="match status" value="1"/>
</dbReference>
<dbReference type="SUPFAM" id="SSF54821">
    <property type="entry name" value="Ribosomal protein S3 C-terminal domain"/>
    <property type="match status" value="1"/>
</dbReference>
<dbReference type="PROSITE" id="PS50823">
    <property type="entry name" value="KH_TYPE_2"/>
    <property type="match status" value="1"/>
</dbReference>
<dbReference type="PROSITE" id="PS00548">
    <property type="entry name" value="RIBOSOMAL_S3"/>
    <property type="match status" value="1"/>
</dbReference>
<evidence type="ECO:0000255" key="1">
    <source>
        <dbReference type="HAMAP-Rule" id="MF_01309"/>
    </source>
</evidence>
<evidence type="ECO:0000305" key="2"/>
<name>RS3_BACAN</name>
<protein>
    <recommendedName>
        <fullName evidence="1">Small ribosomal subunit protein uS3</fullName>
    </recommendedName>
    <alternativeName>
        <fullName evidence="2">30S ribosomal protein S3</fullName>
    </alternativeName>
</protein>
<organism>
    <name type="scientific">Bacillus anthracis</name>
    <dbReference type="NCBI Taxonomy" id="1392"/>
    <lineage>
        <taxon>Bacteria</taxon>
        <taxon>Bacillati</taxon>
        <taxon>Bacillota</taxon>
        <taxon>Bacilli</taxon>
        <taxon>Bacillales</taxon>
        <taxon>Bacillaceae</taxon>
        <taxon>Bacillus</taxon>
        <taxon>Bacillus cereus group</taxon>
    </lineage>
</organism>